<proteinExistence type="inferred from homology"/>
<keyword id="KW-0963">Cytoplasm</keyword>
<keyword id="KW-0328">Glycosyltransferase</keyword>
<keyword id="KW-0660">Purine salvage</keyword>
<keyword id="KW-1185">Reference proteome</keyword>
<keyword id="KW-0808">Transferase</keyword>
<name>XPT_LIGS1</name>
<reference key="1">
    <citation type="journal article" date="2006" name="Proc. Natl. Acad. Sci. U.S.A.">
        <title>Multireplicon genome architecture of Lactobacillus salivarius.</title>
        <authorList>
            <person name="Claesson M.J."/>
            <person name="Li Y."/>
            <person name="Leahy S."/>
            <person name="Canchaya C."/>
            <person name="van Pijkeren J.P."/>
            <person name="Cerdeno-Tarraga A.M."/>
            <person name="Parkhill J."/>
            <person name="Flynn S."/>
            <person name="O'Sullivan G.C."/>
            <person name="Collins J.K."/>
            <person name="Higgins D."/>
            <person name="Shanahan F."/>
            <person name="Fitzgerald G.F."/>
            <person name="van Sinderen D."/>
            <person name="O'Toole P.W."/>
        </authorList>
    </citation>
    <scope>NUCLEOTIDE SEQUENCE [LARGE SCALE GENOMIC DNA]</scope>
    <source>
        <strain>UCC118</strain>
    </source>
</reference>
<protein>
    <recommendedName>
        <fullName evidence="1">Xanthine phosphoribosyltransferase</fullName>
        <shortName evidence="1">XPRTase</shortName>
        <ecNumber evidence="1">2.4.2.22</ecNumber>
    </recommendedName>
</protein>
<gene>
    <name evidence="1" type="primary">xpt</name>
    <name type="ordered locus">LSL_1309</name>
</gene>
<feature type="chain" id="PRO_0000339712" description="Xanthine phosphoribosyltransferase">
    <location>
        <begin position="1"/>
        <end position="192"/>
    </location>
</feature>
<feature type="binding site" evidence="1">
    <location>
        <position position="20"/>
    </location>
    <ligand>
        <name>xanthine</name>
        <dbReference type="ChEBI" id="CHEBI:17712"/>
    </ligand>
</feature>
<feature type="binding site" evidence="1">
    <location>
        <position position="27"/>
    </location>
    <ligand>
        <name>xanthine</name>
        <dbReference type="ChEBI" id="CHEBI:17712"/>
    </ligand>
</feature>
<feature type="binding site" evidence="1">
    <location>
        <begin position="128"/>
        <end position="132"/>
    </location>
    <ligand>
        <name>5-phospho-alpha-D-ribose 1-diphosphate</name>
        <dbReference type="ChEBI" id="CHEBI:58017"/>
    </ligand>
</feature>
<feature type="binding site" evidence="1">
    <location>
        <position position="156"/>
    </location>
    <ligand>
        <name>xanthine</name>
        <dbReference type="ChEBI" id="CHEBI:17712"/>
    </ligand>
</feature>
<comment type="function">
    <text evidence="1">Converts the preformed base xanthine, a product of nucleic acid breakdown, to xanthosine 5'-monophosphate (XMP), so it can be reused for RNA or DNA synthesis.</text>
</comment>
<comment type="catalytic activity">
    <reaction evidence="1">
        <text>XMP + diphosphate = xanthine + 5-phospho-alpha-D-ribose 1-diphosphate</text>
        <dbReference type="Rhea" id="RHEA:10800"/>
        <dbReference type="ChEBI" id="CHEBI:17712"/>
        <dbReference type="ChEBI" id="CHEBI:33019"/>
        <dbReference type="ChEBI" id="CHEBI:57464"/>
        <dbReference type="ChEBI" id="CHEBI:58017"/>
        <dbReference type="EC" id="2.4.2.22"/>
    </reaction>
</comment>
<comment type="pathway">
    <text evidence="1">Purine metabolism; XMP biosynthesis via salvage pathway; XMP from xanthine: step 1/1.</text>
</comment>
<comment type="subunit">
    <text evidence="1">Homodimer.</text>
</comment>
<comment type="subcellular location">
    <subcellularLocation>
        <location evidence="1">Cytoplasm</location>
    </subcellularLocation>
</comment>
<comment type="similarity">
    <text evidence="1">Belongs to the purine/pyrimidine phosphoribosyltransferase family. Xpt subfamily.</text>
</comment>
<organism>
    <name type="scientific">Ligilactobacillus salivarius (strain UCC118)</name>
    <name type="common">Lactobacillus salivarius</name>
    <dbReference type="NCBI Taxonomy" id="362948"/>
    <lineage>
        <taxon>Bacteria</taxon>
        <taxon>Bacillati</taxon>
        <taxon>Bacillota</taxon>
        <taxon>Bacilli</taxon>
        <taxon>Lactobacillales</taxon>
        <taxon>Lactobacillaceae</taxon>
        <taxon>Ligilactobacillus</taxon>
    </lineage>
</organism>
<dbReference type="EC" id="2.4.2.22" evidence="1"/>
<dbReference type="EMBL" id="CP000233">
    <property type="protein sequence ID" value="ABE00116.1"/>
    <property type="molecule type" value="Genomic_DNA"/>
</dbReference>
<dbReference type="RefSeq" id="WP_011476270.1">
    <property type="nucleotide sequence ID" value="NC_007929.1"/>
</dbReference>
<dbReference type="RefSeq" id="YP_536199.1">
    <property type="nucleotide sequence ID" value="NC_007929.1"/>
</dbReference>
<dbReference type="SMR" id="Q1WSL3"/>
<dbReference type="STRING" id="362948.LSL_1309"/>
<dbReference type="KEGG" id="lsl:LSL_1309"/>
<dbReference type="PATRIC" id="fig|362948.14.peg.1384"/>
<dbReference type="HOGENOM" id="CLU_099015_0_0_9"/>
<dbReference type="OrthoDB" id="9790678at2"/>
<dbReference type="UniPathway" id="UPA00602">
    <property type="reaction ID" value="UER00658"/>
</dbReference>
<dbReference type="Proteomes" id="UP000006559">
    <property type="component" value="Chromosome"/>
</dbReference>
<dbReference type="GO" id="GO:0005737">
    <property type="term" value="C:cytoplasm"/>
    <property type="evidence" value="ECO:0007669"/>
    <property type="project" value="UniProtKB-SubCell"/>
</dbReference>
<dbReference type="GO" id="GO:0000310">
    <property type="term" value="F:xanthine phosphoribosyltransferase activity"/>
    <property type="evidence" value="ECO:0007669"/>
    <property type="project" value="UniProtKB-UniRule"/>
</dbReference>
<dbReference type="GO" id="GO:0006166">
    <property type="term" value="P:purine ribonucleoside salvage"/>
    <property type="evidence" value="ECO:0007669"/>
    <property type="project" value="UniProtKB-KW"/>
</dbReference>
<dbReference type="GO" id="GO:0046110">
    <property type="term" value="P:xanthine metabolic process"/>
    <property type="evidence" value="ECO:0007669"/>
    <property type="project" value="InterPro"/>
</dbReference>
<dbReference type="GO" id="GO:0032265">
    <property type="term" value="P:XMP salvage"/>
    <property type="evidence" value="ECO:0007669"/>
    <property type="project" value="UniProtKB-UniRule"/>
</dbReference>
<dbReference type="CDD" id="cd06223">
    <property type="entry name" value="PRTases_typeI"/>
    <property type="match status" value="1"/>
</dbReference>
<dbReference type="Gene3D" id="3.40.50.2020">
    <property type="match status" value="1"/>
</dbReference>
<dbReference type="HAMAP" id="MF_01184">
    <property type="entry name" value="XPRTase"/>
    <property type="match status" value="1"/>
</dbReference>
<dbReference type="InterPro" id="IPR000836">
    <property type="entry name" value="PRibTrfase_dom"/>
</dbReference>
<dbReference type="InterPro" id="IPR029057">
    <property type="entry name" value="PRTase-like"/>
</dbReference>
<dbReference type="InterPro" id="IPR050118">
    <property type="entry name" value="Pur/Pyrimidine_PRTase"/>
</dbReference>
<dbReference type="InterPro" id="IPR010079">
    <property type="entry name" value="Xanthine_PRibTrfase"/>
</dbReference>
<dbReference type="NCBIfam" id="NF006671">
    <property type="entry name" value="PRK09219.1"/>
    <property type="match status" value="1"/>
</dbReference>
<dbReference type="NCBIfam" id="TIGR01744">
    <property type="entry name" value="XPRTase"/>
    <property type="match status" value="1"/>
</dbReference>
<dbReference type="PANTHER" id="PTHR43864">
    <property type="entry name" value="HYPOXANTHINE/GUANINE PHOSPHORIBOSYLTRANSFERASE"/>
    <property type="match status" value="1"/>
</dbReference>
<dbReference type="PANTHER" id="PTHR43864:SF1">
    <property type="entry name" value="XANTHINE PHOSPHORIBOSYLTRANSFERASE"/>
    <property type="match status" value="1"/>
</dbReference>
<dbReference type="SUPFAM" id="SSF53271">
    <property type="entry name" value="PRTase-like"/>
    <property type="match status" value="1"/>
</dbReference>
<sequence>MKLLEERIKKDGVVLPGNVLKVNQFLNHQIDPELMYKMGEEFARLFKDEEITKIITVESSGIAPAVMTGLVMKLPVVFARKHKSLTLVDNLYTSDVYSYTKKVTNTISVDKKFLTSDDKVLVIDDFLANGQAVQGIFNICDAAGAEIKGVGIVIEKSFQEGAKIIHDRGVRLESLAVISSFDDNQVHFEGEE</sequence>
<accession>Q1WSL3</accession>
<evidence type="ECO:0000255" key="1">
    <source>
        <dbReference type="HAMAP-Rule" id="MF_01184"/>
    </source>
</evidence>